<keyword id="KW-0496">Mitochondrion</keyword>
<keyword id="KW-1185">Reference proteome</keyword>
<keyword id="KW-0687">Ribonucleoprotein</keyword>
<keyword id="KW-0689">Ribosomal protein</keyword>
<sequence>MKIQTNAVNVLERTSAYLRTGVIKETPAWYNVVASIPPVTKFTREPHKINPSTDKKVSELKDPDLESVNRNGLYKTRFNALERKVANKQIYKPPKLVYLEDKIRTLFYKQHPWELARPKIVSENEINTNPDWKNMLQLGQPLDGENVVQRTLYLLKTKEQSNITDAYDQARLEFYRLRMQQELEEQVAAEEAEMFGSVFGPSTIEHGVTKEQQVIEKWKRDAELQSELLSAKKENASKAAGDASAVSSEKQVEDDVVNFDESTDADQEVLHF</sequence>
<gene>
    <name type="primary">RSM25</name>
    <name type="ordered locus">CAGL0D04158g</name>
</gene>
<organism>
    <name type="scientific">Candida glabrata (strain ATCC 2001 / BCRC 20586 / JCM 3761 / NBRC 0622 / NRRL Y-65 / CBS 138)</name>
    <name type="common">Yeast</name>
    <name type="synonym">Nakaseomyces glabratus</name>
    <dbReference type="NCBI Taxonomy" id="284593"/>
    <lineage>
        <taxon>Eukaryota</taxon>
        <taxon>Fungi</taxon>
        <taxon>Dikarya</taxon>
        <taxon>Ascomycota</taxon>
        <taxon>Saccharomycotina</taxon>
        <taxon>Saccharomycetes</taxon>
        <taxon>Saccharomycetales</taxon>
        <taxon>Saccharomycetaceae</taxon>
        <taxon>Nakaseomyces</taxon>
    </lineage>
</organism>
<reference key="1">
    <citation type="journal article" date="2004" name="Nature">
        <title>Genome evolution in yeasts.</title>
        <authorList>
            <person name="Dujon B."/>
            <person name="Sherman D."/>
            <person name="Fischer G."/>
            <person name="Durrens P."/>
            <person name="Casaregola S."/>
            <person name="Lafontaine I."/>
            <person name="de Montigny J."/>
            <person name="Marck C."/>
            <person name="Neuveglise C."/>
            <person name="Talla E."/>
            <person name="Goffard N."/>
            <person name="Frangeul L."/>
            <person name="Aigle M."/>
            <person name="Anthouard V."/>
            <person name="Babour A."/>
            <person name="Barbe V."/>
            <person name="Barnay S."/>
            <person name="Blanchin S."/>
            <person name="Beckerich J.-M."/>
            <person name="Beyne E."/>
            <person name="Bleykasten C."/>
            <person name="Boisrame A."/>
            <person name="Boyer J."/>
            <person name="Cattolico L."/>
            <person name="Confanioleri F."/>
            <person name="de Daruvar A."/>
            <person name="Despons L."/>
            <person name="Fabre E."/>
            <person name="Fairhead C."/>
            <person name="Ferry-Dumazet H."/>
            <person name="Groppi A."/>
            <person name="Hantraye F."/>
            <person name="Hennequin C."/>
            <person name="Jauniaux N."/>
            <person name="Joyet P."/>
            <person name="Kachouri R."/>
            <person name="Kerrest A."/>
            <person name="Koszul R."/>
            <person name="Lemaire M."/>
            <person name="Lesur I."/>
            <person name="Ma L."/>
            <person name="Muller H."/>
            <person name="Nicaud J.-M."/>
            <person name="Nikolski M."/>
            <person name="Oztas S."/>
            <person name="Ozier-Kalogeropoulos O."/>
            <person name="Pellenz S."/>
            <person name="Potier S."/>
            <person name="Richard G.-F."/>
            <person name="Straub M.-L."/>
            <person name="Suleau A."/>
            <person name="Swennen D."/>
            <person name="Tekaia F."/>
            <person name="Wesolowski-Louvel M."/>
            <person name="Westhof E."/>
            <person name="Wirth B."/>
            <person name="Zeniou-Meyer M."/>
            <person name="Zivanovic Y."/>
            <person name="Bolotin-Fukuhara M."/>
            <person name="Thierry A."/>
            <person name="Bouchier C."/>
            <person name="Caudron B."/>
            <person name="Scarpelli C."/>
            <person name="Gaillardin C."/>
            <person name="Weissenbach J."/>
            <person name="Wincker P."/>
            <person name="Souciet J.-L."/>
        </authorList>
    </citation>
    <scope>NUCLEOTIDE SEQUENCE [LARGE SCALE GENOMIC DNA]</scope>
    <source>
        <strain>ATCC 2001 / BCRC 20586 / JCM 3761 / NBRC 0622 / NRRL Y-65 / CBS 138</strain>
    </source>
</reference>
<proteinExistence type="inferred from homology"/>
<dbReference type="EMBL" id="CR380950">
    <property type="protein sequence ID" value="CAG58508.1"/>
    <property type="molecule type" value="Genomic_DNA"/>
</dbReference>
<dbReference type="RefSeq" id="XP_445597.1">
    <property type="nucleotide sequence ID" value="XM_445597.1"/>
</dbReference>
<dbReference type="SMR" id="Q6FVZ7"/>
<dbReference type="FunCoup" id="Q6FVZ7">
    <property type="interactions" value="168"/>
</dbReference>
<dbReference type="STRING" id="284593.Q6FVZ7"/>
<dbReference type="EnsemblFungi" id="CAGL0D04158g-T">
    <property type="protein sequence ID" value="CAGL0D04158g-T-p1"/>
    <property type="gene ID" value="CAGL0D04158g"/>
</dbReference>
<dbReference type="KEGG" id="cgr:2887191"/>
<dbReference type="CGD" id="CAL0128099">
    <property type="gene designation" value="CAGL0D04158g"/>
</dbReference>
<dbReference type="VEuPathDB" id="FungiDB:B1J91_D04158g"/>
<dbReference type="VEuPathDB" id="FungiDB:CAGL0D04158g"/>
<dbReference type="eggNOG" id="ENOG502RZQQ">
    <property type="taxonomic scope" value="Eukaryota"/>
</dbReference>
<dbReference type="HOGENOM" id="CLU_081350_0_0_1"/>
<dbReference type="InParanoid" id="Q6FVZ7"/>
<dbReference type="OMA" id="ENWKIWA"/>
<dbReference type="Proteomes" id="UP000002428">
    <property type="component" value="Chromosome D"/>
</dbReference>
<dbReference type="GO" id="GO:0005763">
    <property type="term" value="C:mitochondrial small ribosomal subunit"/>
    <property type="evidence" value="ECO:0007669"/>
    <property type="project" value="EnsemblFungi"/>
</dbReference>
<dbReference type="GO" id="GO:0003735">
    <property type="term" value="F:structural constituent of ribosome"/>
    <property type="evidence" value="ECO:0007669"/>
    <property type="project" value="EnsemblFungi"/>
</dbReference>
<dbReference type="CDD" id="cd23701">
    <property type="entry name" value="At1g26750"/>
    <property type="match status" value="1"/>
</dbReference>
<dbReference type="InterPro" id="IPR016939">
    <property type="entry name" value="Ribosomal_mS23_fun"/>
</dbReference>
<dbReference type="PANTHER" id="PTHR37799">
    <property type="entry name" value="37S RIBOSOMAL PROTEIN S25, MITOCHONDRIAL"/>
    <property type="match status" value="1"/>
</dbReference>
<dbReference type="PANTHER" id="PTHR37799:SF1">
    <property type="entry name" value="SMALL RIBOSOMAL SUBUNIT PROTEIN MS23"/>
    <property type="match status" value="1"/>
</dbReference>
<dbReference type="Pfam" id="PF13741">
    <property type="entry name" value="MRP-S25"/>
    <property type="match status" value="1"/>
</dbReference>
<dbReference type="PIRSF" id="PIRSF029764">
    <property type="entry name" value="RSM25"/>
    <property type="match status" value="1"/>
</dbReference>
<name>RT25_CANGA</name>
<comment type="subunit">
    <text evidence="1">Component of the mitochondrial small ribosomal subunit.</text>
</comment>
<comment type="subcellular location">
    <subcellularLocation>
        <location evidence="1">Mitochondrion</location>
    </subcellularLocation>
</comment>
<comment type="similarity">
    <text evidence="3">Belongs to the mitochondrion-specific ribosomal protein mS23 family.</text>
</comment>
<feature type="chain" id="PRO_0000343547" description="Small ribosomal subunit protein mS23">
    <location>
        <begin position="1"/>
        <end position="272"/>
    </location>
</feature>
<feature type="region of interest" description="Disordered" evidence="2">
    <location>
        <begin position="233"/>
        <end position="272"/>
    </location>
</feature>
<feature type="compositionally biased region" description="Acidic residues" evidence="2">
    <location>
        <begin position="252"/>
        <end position="272"/>
    </location>
</feature>
<protein>
    <recommendedName>
        <fullName evidence="3">Small ribosomal subunit protein mS23</fullName>
    </recommendedName>
    <alternativeName>
        <fullName>37S ribosomal protein S25, mitochondrial</fullName>
    </alternativeName>
</protein>
<evidence type="ECO:0000250" key="1"/>
<evidence type="ECO:0000256" key="2">
    <source>
        <dbReference type="SAM" id="MobiDB-lite"/>
    </source>
</evidence>
<evidence type="ECO:0000305" key="3"/>
<accession>Q6FVZ7</accession>